<sequence length="158" mass="17428">MAKVESFTLDHTKVLAPYVRKITVENGPKGDAITNFDLRLVQPNKTAIDTAGLHTIEHMLAGLLRDRMDGVIDCSPFGCRTGFHLITWGEHDTVEVAKALKSSLEFIAGPAKWEDVQGTTIDSCGNYKDHSLFSAKEWAKLILSQGISSDPFVRKVVE</sequence>
<name>LUXS_LACPL</name>
<gene>
    <name evidence="1" type="primary">luxS</name>
    <name type="ordered locus">lp_0774</name>
</gene>
<evidence type="ECO:0000255" key="1">
    <source>
        <dbReference type="HAMAP-Rule" id="MF_00091"/>
    </source>
</evidence>
<accession>Q88YI6</accession>
<accession>F9ULZ8</accession>
<keyword id="KW-0071">Autoinducer synthesis</keyword>
<keyword id="KW-0408">Iron</keyword>
<keyword id="KW-0456">Lyase</keyword>
<keyword id="KW-0479">Metal-binding</keyword>
<keyword id="KW-0673">Quorum sensing</keyword>
<keyword id="KW-1185">Reference proteome</keyword>
<dbReference type="EC" id="4.4.1.21" evidence="1"/>
<dbReference type="EMBL" id="AL935263">
    <property type="protein sequence ID" value="CCC78237.1"/>
    <property type="molecule type" value="Genomic_DNA"/>
</dbReference>
<dbReference type="RefSeq" id="WP_003641031.1">
    <property type="nucleotide sequence ID" value="NC_004567.2"/>
</dbReference>
<dbReference type="RefSeq" id="YP_004888751.1">
    <property type="nucleotide sequence ID" value="NC_004567.2"/>
</dbReference>
<dbReference type="SMR" id="Q88YI6"/>
<dbReference type="STRING" id="220668.lp_0774"/>
<dbReference type="EnsemblBacteria" id="CCC78237">
    <property type="protein sequence ID" value="CCC78237"/>
    <property type="gene ID" value="lp_0774"/>
</dbReference>
<dbReference type="KEGG" id="lpl:lp_0774"/>
<dbReference type="PATRIC" id="fig|220668.9.peg.654"/>
<dbReference type="eggNOG" id="COG1854">
    <property type="taxonomic scope" value="Bacteria"/>
</dbReference>
<dbReference type="HOGENOM" id="CLU_107531_2_1_9"/>
<dbReference type="OrthoDB" id="9788129at2"/>
<dbReference type="PhylomeDB" id="Q88YI6"/>
<dbReference type="Proteomes" id="UP000000432">
    <property type="component" value="Chromosome"/>
</dbReference>
<dbReference type="GO" id="GO:0005506">
    <property type="term" value="F:iron ion binding"/>
    <property type="evidence" value="ECO:0007669"/>
    <property type="project" value="InterPro"/>
</dbReference>
<dbReference type="GO" id="GO:0043768">
    <property type="term" value="F:S-ribosylhomocysteine lyase activity"/>
    <property type="evidence" value="ECO:0007669"/>
    <property type="project" value="UniProtKB-UniRule"/>
</dbReference>
<dbReference type="GO" id="GO:0009372">
    <property type="term" value="P:quorum sensing"/>
    <property type="evidence" value="ECO:0007669"/>
    <property type="project" value="UniProtKB-UniRule"/>
</dbReference>
<dbReference type="Gene3D" id="3.30.1360.80">
    <property type="entry name" value="S-ribosylhomocysteinase (LuxS)"/>
    <property type="match status" value="1"/>
</dbReference>
<dbReference type="HAMAP" id="MF_00091">
    <property type="entry name" value="LuxS"/>
    <property type="match status" value="1"/>
</dbReference>
<dbReference type="InterPro" id="IPR037005">
    <property type="entry name" value="LuxS_sf"/>
</dbReference>
<dbReference type="InterPro" id="IPR011249">
    <property type="entry name" value="Metalloenz_LuxS/M16"/>
</dbReference>
<dbReference type="InterPro" id="IPR003815">
    <property type="entry name" value="S-ribosylhomocysteinase"/>
</dbReference>
<dbReference type="NCBIfam" id="NF002608">
    <property type="entry name" value="PRK02260.3-1"/>
    <property type="match status" value="1"/>
</dbReference>
<dbReference type="PANTHER" id="PTHR35799">
    <property type="entry name" value="S-RIBOSYLHOMOCYSTEINE LYASE"/>
    <property type="match status" value="1"/>
</dbReference>
<dbReference type="PANTHER" id="PTHR35799:SF1">
    <property type="entry name" value="S-RIBOSYLHOMOCYSTEINE LYASE"/>
    <property type="match status" value="1"/>
</dbReference>
<dbReference type="Pfam" id="PF02664">
    <property type="entry name" value="LuxS"/>
    <property type="match status" value="1"/>
</dbReference>
<dbReference type="PIRSF" id="PIRSF006160">
    <property type="entry name" value="AI2"/>
    <property type="match status" value="1"/>
</dbReference>
<dbReference type="PRINTS" id="PR01487">
    <property type="entry name" value="LUXSPROTEIN"/>
</dbReference>
<dbReference type="SUPFAM" id="SSF63411">
    <property type="entry name" value="LuxS/MPP-like metallohydrolase"/>
    <property type="match status" value="1"/>
</dbReference>
<feature type="chain" id="PRO_0000172233" description="S-ribosylhomocysteine lyase">
    <location>
        <begin position="1"/>
        <end position="158"/>
    </location>
</feature>
<feature type="binding site" evidence="1">
    <location>
        <position position="54"/>
    </location>
    <ligand>
        <name>Fe cation</name>
        <dbReference type="ChEBI" id="CHEBI:24875"/>
    </ligand>
</feature>
<feature type="binding site" evidence="1">
    <location>
        <position position="58"/>
    </location>
    <ligand>
        <name>Fe cation</name>
        <dbReference type="ChEBI" id="CHEBI:24875"/>
    </ligand>
</feature>
<feature type="binding site" evidence="1">
    <location>
        <position position="124"/>
    </location>
    <ligand>
        <name>Fe cation</name>
        <dbReference type="ChEBI" id="CHEBI:24875"/>
    </ligand>
</feature>
<reference key="1">
    <citation type="journal article" date="2003" name="Proc. Natl. Acad. Sci. U.S.A.">
        <title>Complete genome sequence of Lactobacillus plantarum WCFS1.</title>
        <authorList>
            <person name="Kleerebezem M."/>
            <person name="Boekhorst J."/>
            <person name="van Kranenburg R."/>
            <person name="Molenaar D."/>
            <person name="Kuipers O.P."/>
            <person name="Leer R."/>
            <person name="Tarchini R."/>
            <person name="Peters S.A."/>
            <person name="Sandbrink H.M."/>
            <person name="Fiers M.W.E.J."/>
            <person name="Stiekema W."/>
            <person name="Klein Lankhorst R.M."/>
            <person name="Bron P.A."/>
            <person name="Hoffer S.M."/>
            <person name="Nierop Groot M.N."/>
            <person name="Kerkhoven R."/>
            <person name="De Vries M."/>
            <person name="Ursing B."/>
            <person name="De Vos W.M."/>
            <person name="Siezen R.J."/>
        </authorList>
    </citation>
    <scope>NUCLEOTIDE SEQUENCE [LARGE SCALE GENOMIC DNA]</scope>
    <source>
        <strain>ATCC BAA-793 / NCIMB 8826 / WCFS1</strain>
    </source>
</reference>
<reference key="2">
    <citation type="journal article" date="2012" name="J. Bacteriol.">
        <title>Complete resequencing and reannotation of the Lactobacillus plantarum WCFS1 genome.</title>
        <authorList>
            <person name="Siezen R.J."/>
            <person name="Francke C."/>
            <person name="Renckens B."/>
            <person name="Boekhorst J."/>
            <person name="Wels M."/>
            <person name="Kleerebezem M."/>
            <person name="van Hijum S.A."/>
        </authorList>
    </citation>
    <scope>NUCLEOTIDE SEQUENCE [LARGE SCALE GENOMIC DNA]</scope>
    <scope>GENOME REANNOTATION</scope>
    <source>
        <strain>ATCC BAA-793 / NCIMB 8826 / WCFS1</strain>
    </source>
</reference>
<organism>
    <name type="scientific">Lactiplantibacillus plantarum (strain ATCC BAA-793 / NCIMB 8826 / WCFS1)</name>
    <name type="common">Lactobacillus plantarum</name>
    <dbReference type="NCBI Taxonomy" id="220668"/>
    <lineage>
        <taxon>Bacteria</taxon>
        <taxon>Bacillati</taxon>
        <taxon>Bacillota</taxon>
        <taxon>Bacilli</taxon>
        <taxon>Lactobacillales</taxon>
        <taxon>Lactobacillaceae</taxon>
        <taxon>Lactiplantibacillus</taxon>
    </lineage>
</organism>
<protein>
    <recommendedName>
        <fullName evidence="1">S-ribosylhomocysteine lyase</fullName>
        <ecNumber evidence="1">4.4.1.21</ecNumber>
    </recommendedName>
    <alternativeName>
        <fullName evidence="1">AI-2 synthesis protein</fullName>
    </alternativeName>
    <alternativeName>
        <fullName evidence="1">Autoinducer-2 production protein LuxS</fullName>
    </alternativeName>
</protein>
<proteinExistence type="inferred from homology"/>
<comment type="function">
    <text evidence="1">Involved in the synthesis of autoinducer 2 (AI-2) which is secreted by bacteria and is used to communicate both the cell density and the metabolic potential of the environment. The regulation of gene expression in response to changes in cell density is called quorum sensing. Catalyzes the transformation of S-ribosylhomocysteine (RHC) to homocysteine (HC) and 4,5-dihydroxy-2,3-pentadione (DPD).</text>
</comment>
<comment type="catalytic activity">
    <reaction evidence="1">
        <text>S-(5-deoxy-D-ribos-5-yl)-L-homocysteine = (S)-4,5-dihydroxypentane-2,3-dione + L-homocysteine</text>
        <dbReference type="Rhea" id="RHEA:17753"/>
        <dbReference type="ChEBI" id="CHEBI:29484"/>
        <dbReference type="ChEBI" id="CHEBI:58195"/>
        <dbReference type="ChEBI" id="CHEBI:58199"/>
        <dbReference type="EC" id="4.4.1.21"/>
    </reaction>
</comment>
<comment type="cofactor">
    <cofactor evidence="1">
        <name>Fe cation</name>
        <dbReference type="ChEBI" id="CHEBI:24875"/>
    </cofactor>
    <text evidence="1">Binds 1 Fe cation per subunit.</text>
</comment>
<comment type="subunit">
    <text evidence="1">Homodimer.</text>
</comment>
<comment type="similarity">
    <text evidence="1">Belongs to the LuxS family.</text>
</comment>